<dbReference type="EMBL" id="CP000510">
    <property type="protein sequence ID" value="ABM04039.1"/>
    <property type="molecule type" value="Genomic_DNA"/>
</dbReference>
<dbReference type="RefSeq" id="WP_011770599.1">
    <property type="nucleotide sequence ID" value="NC_008709.1"/>
</dbReference>
<dbReference type="SMR" id="A1SX24"/>
<dbReference type="STRING" id="357804.Ping_2298"/>
<dbReference type="KEGG" id="pin:Ping_2298"/>
<dbReference type="eggNOG" id="ENOG5031M1D">
    <property type="taxonomic scope" value="Bacteria"/>
</dbReference>
<dbReference type="HOGENOM" id="CLU_128248_0_0_6"/>
<dbReference type="Proteomes" id="UP000000639">
    <property type="component" value="Chromosome"/>
</dbReference>
<dbReference type="GO" id="GO:0005737">
    <property type="term" value="C:cytoplasm"/>
    <property type="evidence" value="ECO:0007669"/>
    <property type="project" value="UniProtKB-SubCell"/>
</dbReference>
<dbReference type="GO" id="GO:0000917">
    <property type="term" value="P:division septum assembly"/>
    <property type="evidence" value="ECO:0007669"/>
    <property type="project" value="UniProtKB-KW"/>
</dbReference>
<dbReference type="GO" id="GO:0043093">
    <property type="term" value="P:FtsZ-dependent cytokinesis"/>
    <property type="evidence" value="ECO:0007669"/>
    <property type="project" value="UniProtKB-UniRule"/>
</dbReference>
<dbReference type="HAMAP" id="MF_00906">
    <property type="entry name" value="ZapC"/>
    <property type="match status" value="1"/>
</dbReference>
<dbReference type="InterPro" id="IPR009809">
    <property type="entry name" value="ZapC"/>
</dbReference>
<dbReference type="InterPro" id="IPR048372">
    <property type="entry name" value="ZapC_C"/>
</dbReference>
<dbReference type="InterPro" id="IPR048373">
    <property type="entry name" value="ZapC_N"/>
</dbReference>
<dbReference type="Pfam" id="PF07126">
    <property type="entry name" value="ZapC_C"/>
    <property type="match status" value="1"/>
</dbReference>
<dbReference type="Pfam" id="PF21083">
    <property type="entry name" value="ZapC_N"/>
    <property type="match status" value="1"/>
</dbReference>
<dbReference type="PIRSF" id="PIRSF010252">
    <property type="entry name" value="ZapC"/>
    <property type="match status" value="1"/>
</dbReference>
<protein>
    <recommendedName>
        <fullName evidence="1">Cell division protein ZapC</fullName>
    </recommendedName>
</protein>
<proteinExistence type="inferred from homology"/>
<organism>
    <name type="scientific">Psychromonas ingrahamii (strain DSM 17664 / CCUG 51855 / 37)</name>
    <dbReference type="NCBI Taxonomy" id="357804"/>
    <lineage>
        <taxon>Bacteria</taxon>
        <taxon>Pseudomonadati</taxon>
        <taxon>Pseudomonadota</taxon>
        <taxon>Gammaproteobacteria</taxon>
        <taxon>Alteromonadales</taxon>
        <taxon>Psychromonadaceae</taxon>
        <taxon>Psychromonas</taxon>
    </lineage>
</organism>
<comment type="function">
    <text evidence="1">Contributes to the efficiency of the cell division process by stabilizing the polymeric form of the cell division protein FtsZ. Acts by promoting interactions between FtsZ protofilaments and suppressing the GTPase activity of FtsZ.</text>
</comment>
<comment type="subunit">
    <text evidence="1">Interacts directly with FtsZ.</text>
</comment>
<comment type="subcellular location">
    <subcellularLocation>
        <location evidence="1">Cytoplasm</location>
    </subcellularLocation>
</comment>
<comment type="similarity">
    <text evidence="1">Belongs to the ZapC family.</text>
</comment>
<gene>
    <name evidence="1" type="primary">zapC</name>
    <name type="ordered locus">Ping_2298</name>
</gene>
<name>ZAPC_PSYIN</name>
<reference key="1">
    <citation type="journal article" date="2008" name="BMC Genomics">
        <title>Genomics of an extreme psychrophile, Psychromonas ingrahamii.</title>
        <authorList>
            <person name="Riley M."/>
            <person name="Staley J.T."/>
            <person name="Danchin A."/>
            <person name="Wang T.Z."/>
            <person name="Brettin T.S."/>
            <person name="Hauser L.J."/>
            <person name="Land M.L."/>
            <person name="Thompson L.S."/>
        </authorList>
    </citation>
    <scope>NUCLEOTIDE SEQUENCE [LARGE SCALE GENOMIC DNA]</scope>
    <source>
        <strain>DSM 17664 / CCUG 51855 / 37</strain>
    </source>
</reference>
<evidence type="ECO:0000255" key="1">
    <source>
        <dbReference type="HAMAP-Rule" id="MF_00906"/>
    </source>
</evidence>
<feature type="chain" id="PRO_0000413785" description="Cell division protein ZapC">
    <location>
        <begin position="1"/>
        <end position="188"/>
    </location>
</feature>
<sequence length="188" mass="22103">MCKKTHRIIDFRPQANWYWLFDHNRAILTLNMGDRVIDIVYKPEMLILKFDQPVFFTIEDVANYMDLFEGPALGDYWPALRSQIILHALVANQFHKPIMPKNWLFESSVGEQPRVHKGDHIILKSSAIKEAKKYFVLDNDENFILCMLIEKSHGLTFNRNFVQFQIVKVTYDKIFATKADCNTLSQYV</sequence>
<accession>A1SX24</accession>
<keyword id="KW-0131">Cell cycle</keyword>
<keyword id="KW-0132">Cell division</keyword>
<keyword id="KW-0963">Cytoplasm</keyword>
<keyword id="KW-1185">Reference proteome</keyword>
<keyword id="KW-0717">Septation</keyword>